<comment type="function">
    <text evidence="2">Component of the transcription regulatory histone acetylation (HAT) complex SAGA, a multiprotein complex that activates transcription by remodeling chromatin and mediating histone acetylation and deubiquitination. Within the SAGA complex, participates in a subcomplex that specifically deubiquitinates both histones H2A and H2B. The SAGA complex is recruited to specific gene promoters by activators such as MYC, where it is required for transcription. Required for nuclear receptor-mediated transactivation. Within the complex, it is required to recruit USP22 and ENY2 into the SAGA complex. Regulates H2B monoubiquitination (H2Bub1) levels. Affects subcellular distribution of ENY2, USP22 and ATXN7L3B.</text>
</comment>
<comment type="subunit">
    <text evidence="2">Component of some SAGA transcription coactivator-HAT complexes, at least composed of ATXN7, ATXN7L3, ENY2, GCN5L2, SUPT3H, TAF10, TRRAP and USP22. Within the SAGA complex, ENY2, ATXN7, ATXN7L3, and USP22 form an additional subcomplex of SAGA called the DUB module (deubiquitination module). Interacts directly with ENY2 and USP22.</text>
</comment>
<comment type="subcellular location">
    <subcellularLocation>
        <location evidence="2">Nucleus</location>
    </subcellularLocation>
</comment>
<comment type="alternative products">
    <event type="alternative splicing"/>
    <isoform>
        <id>A2AWT3-1</id>
        <name>1</name>
        <sequence type="displayed"/>
    </isoform>
    <isoform>
        <id>A2AWT3-2</id>
        <name>2</name>
        <sequence type="described" ref="VSP_036728"/>
    </isoform>
</comment>
<comment type="domain">
    <text evidence="2">The long N-terminal helix forms part of the 'assembly lobe' of the SAGA deubiquitination module.</text>
</comment>
<comment type="domain">
    <text evidence="2">The C-terminal SGF11-type zinc-finger domain together with the C-terminal catalytic domain of USP22 forms the 'catalytic lobe' of the SAGA deubiquitination module.</text>
</comment>
<comment type="similarity">
    <text evidence="2">Belongs to the SGF11 family.</text>
</comment>
<comment type="sequence caution" evidence="4">
    <conflict type="erroneous gene model prediction">
        <sequence resource="EMBL-CDS" id="CAM25078"/>
    </conflict>
</comment>
<feature type="chain" id="PRO_0000367516" description="Ataxin-7-like protein 3">
    <location>
        <begin position="1"/>
        <end position="347"/>
    </location>
</feature>
<feature type="domain" description="SCA7" evidence="2">
    <location>
        <begin position="196"/>
        <end position="263"/>
    </location>
</feature>
<feature type="zinc finger region" description="SGF11-type" evidence="2">
    <location>
        <begin position="84"/>
        <end position="105"/>
    </location>
</feature>
<feature type="region of interest" description="Disordered" evidence="3">
    <location>
        <begin position="116"/>
        <end position="184"/>
    </location>
</feature>
<feature type="region of interest" description="Disordered" evidence="3">
    <location>
        <begin position="275"/>
        <end position="347"/>
    </location>
</feature>
<feature type="compositionally biased region" description="Low complexity" evidence="3">
    <location>
        <begin position="116"/>
        <end position="125"/>
    </location>
</feature>
<feature type="compositionally biased region" description="Acidic residues" evidence="3">
    <location>
        <begin position="132"/>
        <end position="141"/>
    </location>
</feature>
<feature type="compositionally biased region" description="Low complexity" evidence="3">
    <location>
        <begin position="275"/>
        <end position="288"/>
    </location>
</feature>
<feature type="modified residue" description="Phosphoserine" evidence="1">
    <location>
        <position position="129"/>
    </location>
</feature>
<feature type="modified residue" description="Phosphoserine" evidence="1">
    <location>
        <position position="131"/>
    </location>
</feature>
<feature type="modified residue" description="Phosphoserine" evidence="1">
    <location>
        <position position="278"/>
    </location>
</feature>
<feature type="modified residue" description="Phosphoserine" evidence="5">
    <location>
        <position position="281"/>
    </location>
</feature>
<feature type="modified residue" description="Phosphoserine" evidence="1">
    <location>
        <position position="326"/>
    </location>
</feature>
<feature type="splice variant" id="VSP_036728" description="In isoform 2." evidence="4">
    <original>K</original>
    <variation>KLWYLPFQ</variation>
    <location>
        <position position="159"/>
    </location>
</feature>
<dbReference type="EMBL" id="AL954730">
    <property type="protein sequence ID" value="CAM25078.1"/>
    <property type="status" value="ALT_SEQ"/>
    <property type="molecule type" value="Genomic_DNA"/>
</dbReference>
<dbReference type="EMBL" id="AL954730">
    <property type="protein sequence ID" value="CAM25079.1"/>
    <property type="molecule type" value="Genomic_DNA"/>
</dbReference>
<dbReference type="EMBL" id="AL954730">
    <property type="protein sequence ID" value="CAM25080.1"/>
    <property type="molecule type" value="Genomic_DNA"/>
</dbReference>
<dbReference type="EMBL" id="CH466558">
    <property type="protein sequence ID" value="EDL34107.1"/>
    <property type="molecule type" value="Genomic_DNA"/>
</dbReference>
<dbReference type="EMBL" id="AK090368">
    <property type="protein sequence ID" value="BAC41186.1"/>
    <property type="molecule type" value="mRNA"/>
</dbReference>
<dbReference type="CCDS" id="CCDS48941.1">
    <molecule id="A2AWT3-1"/>
</dbReference>
<dbReference type="CCDS" id="CCDS48942.1">
    <molecule id="A2AWT3-2"/>
</dbReference>
<dbReference type="RefSeq" id="NP_001092306.1">
    <molecule id="A2AWT3-2"/>
    <property type="nucleotide sequence ID" value="NM_001098836.2"/>
</dbReference>
<dbReference type="RefSeq" id="NP_001092307.1">
    <molecule id="A2AWT3-1"/>
    <property type="nucleotide sequence ID" value="NM_001098837.2"/>
</dbReference>
<dbReference type="RefSeq" id="NP_001390777.1">
    <molecule id="A2AWT3-2"/>
    <property type="nucleotide sequence ID" value="NM_001403848.1"/>
</dbReference>
<dbReference type="RefSeq" id="NP_001390778.1">
    <molecule id="A2AWT3-1"/>
    <property type="nucleotide sequence ID" value="NM_001403849.1"/>
</dbReference>
<dbReference type="RefSeq" id="NP_001390779.1">
    <molecule id="A2AWT3-1"/>
    <property type="nucleotide sequence ID" value="NM_001403850.1"/>
</dbReference>
<dbReference type="BMRB" id="A2AWT3"/>
<dbReference type="SMR" id="A2AWT3"/>
<dbReference type="BioGRID" id="229867">
    <property type="interactions" value="1"/>
</dbReference>
<dbReference type="ComplexPortal" id="CPX-6803">
    <property type="entry name" value="SAGA complex, KAT2B variant"/>
</dbReference>
<dbReference type="ComplexPortal" id="CPX-916">
    <property type="entry name" value="TFTC histone acetylation complex"/>
</dbReference>
<dbReference type="ComplexPortal" id="CPX-920">
    <property type="entry name" value="SAGA complex, KAT2A variant"/>
</dbReference>
<dbReference type="FunCoup" id="A2AWT3">
    <property type="interactions" value="2095"/>
</dbReference>
<dbReference type="IntAct" id="A2AWT3">
    <property type="interactions" value="2"/>
</dbReference>
<dbReference type="MINT" id="A2AWT3"/>
<dbReference type="STRING" id="10090.ENSMUSP00000102750"/>
<dbReference type="GlyGen" id="A2AWT3">
    <property type="glycosylation" value="1 site"/>
</dbReference>
<dbReference type="iPTMnet" id="A2AWT3"/>
<dbReference type="PhosphoSitePlus" id="A2AWT3"/>
<dbReference type="jPOST" id="A2AWT3"/>
<dbReference type="PaxDb" id="10090-ENSMUSP00000072967"/>
<dbReference type="PeptideAtlas" id="A2AWT3"/>
<dbReference type="ProteomicsDB" id="265129">
    <molecule id="A2AWT3-1"/>
</dbReference>
<dbReference type="ProteomicsDB" id="265130">
    <molecule id="A2AWT3-2"/>
</dbReference>
<dbReference type="Antibodypedia" id="54391">
    <property type="antibodies" value="84 antibodies from 24 providers"/>
</dbReference>
<dbReference type="Ensembl" id="ENSMUST00000073234.9">
    <molecule id="A2AWT3-1"/>
    <property type="protein sequence ID" value="ENSMUSP00000072967.3"/>
    <property type="gene ID" value="ENSMUSG00000059995.13"/>
</dbReference>
<dbReference type="Ensembl" id="ENSMUST00000107132.3">
    <molecule id="A2AWT3-2"/>
    <property type="protein sequence ID" value="ENSMUSP00000102750.3"/>
    <property type="gene ID" value="ENSMUSG00000059995.13"/>
</dbReference>
<dbReference type="Ensembl" id="ENSMUST00000107134.8">
    <molecule id="A2AWT3-1"/>
    <property type="protein sequence ID" value="ENSMUSP00000102752.2"/>
    <property type="gene ID" value="ENSMUSG00000059995.13"/>
</dbReference>
<dbReference type="GeneID" id="217218"/>
<dbReference type="KEGG" id="mmu:217218"/>
<dbReference type="UCSC" id="uc007lrg.1">
    <molecule id="A2AWT3-2"/>
    <property type="organism name" value="mouse"/>
</dbReference>
<dbReference type="UCSC" id="uc007lrh.1">
    <molecule id="A2AWT3-1"/>
    <property type="organism name" value="mouse"/>
</dbReference>
<dbReference type="AGR" id="MGI:3036270"/>
<dbReference type="CTD" id="56970"/>
<dbReference type="MGI" id="MGI:3036270">
    <property type="gene designation" value="Atxn7l3"/>
</dbReference>
<dbReference type="VEuPathDB" id="HostDB:ENSMUSG00000059995"/>
<dbReference type="eggNOG" id="KOG2612">
    <property type="taxonomic scope" value="Eukaryota"/>
</dbReference>
<dbReference type="GeneTree" id="ENSGT00940000158253"/>
<dbReference type="HOGENOM" id="CLU_066241_0_0_1"/>
<dbReference type="InParanoid" id="A2AWT3"/>
<dbReference type="OMA" id="LCTRSMR"/>
<dbReference type="PhylomeDB" id="A2AWT3"/>
<dbReference type="TreeFam" id="TF324580"/>
<dbReference type="BioGRID-ORCS" id="217218">
    <property type="hits" value="18 hits in 79 CRISPR screens"/>
</dbReference>
<dbReference type="ChiTaRS" id="Atxn7l3">
    <property type="organism name" value="mouse"/>
</dbReference>
<dbReference type="PRO" id="PR:A2AWT3"/>
<dbReference type="Proteomes" id="UP000000589">
    <property type="component" value="Chromosome 11"/>
</dbReference>
<dbReference type="RNAct" id="A2AWT3">
    <property type="molecule type" value="protein"/>
</dbReference>
<dbReference type="Bgee" id="ENSMUSG00000059995">
    <property type="expression patterns" value="Expressed in primary motor cortex and 254 other cell types or tissues"/>
</dbReference>
<dbReference type="ExpressionAtlas" id="A2AWT3">
    <property type="expression patterns" value="baseline and differential"/>
</dbReference>
<dbReference type="GO" id="GO:0071819">
    <property type="term" value="C:DUBm complex"/>
    <property type="evidence" value="ECO:0007669"/>
    <property type="project" value="UniProtKB-UniRule"/>
</dbReference>
<dbReference type="GO" id="GO:0000124">
    <property type="term" value="C:SAGA complex"/>
    <property type="evidence" value="ECO:0000250"/>
    <property type="project" value="UniProtKB"/>
</dbReference>
<dbReference type="GO" id="GO:0033276">
    <property type="term" value="C:transcription factor TFTC complex"/>
    <property type="evidence" value="ECO:0000303"/>
    <property type="project" value="ComplexPortal"/>
</dbReference>
<dbReference type="GO" id="GO:0003713">
    <property type="term" value="F:transcription coactivator activity"/>
    <property type="evidence" value="ECO:0000250"/>
    <property type="project" value="UniProtKB"/>
</dbReference>
<dbReference type="GO" id="GO:0008270">
    <property type="term" value="F:zinc ion binding"/>
    <property type="evidence" value="ECO:0007669"/>
    <property type="project" value="UniProtKB-UniRule"/>
</dbReference>
<dbReference type="GO" id="GO:0006325">
    <property type="term" value="P:chromatin organization"/>
    <property type="evidence" value="ECO:0007669"/>
    <property type="project" value="UniProtKB-KW"/>
</dbReference>
<dbReference type="GO" id="GO:0045893">
    <property type="term" value="P:positive regulation of DNA-templated transcription"/>
    <property type="evidence" value="ECO:0000250"/>
    <property type="project" value="UniProtKB"/>
</dbReference>
<dbReference type="GO" id="GO:0006282">
    <property type="term" value="P:regulation of DNA repair"/>
    <property type="evidence" value="ECO:0000303"/>
    <property type="project" value="ComplexPortal"/>
</dbReference>
<dbReference type="GO" id="GO:0043484">
    <property type="term" value="P:regulation of RNA splicing"/>
    <property type="evidence" value="ECO:0000303"/>
    <property type="project" value="ComplexPortal"/>
</dbReference>
<dbReference type="GO" id="GO:0006357">
    <property type="term" value="P:regulation of transcription by RNA polymerase II"/>
    <property type="evidence" value="ECO:0000266"/>
    <property type="project" value="ComplexPortal"/>
</dbReference>
<dbReference type="FunFam" id="3.30.160.60:FF:000118">
    <property type="entry name" value="Ataxin-7-like protein 3"/>
    <property type="match status" value="1"/>
</dbReference>
<dbReference type="Gene3D" id="6.10.140.1270">
    <property type="match status" value="1"/>
</dbReference>
<dbReference type="Gene3D" id="3.30.160.60">
    <property type="entry name" value="Classic Zinc Finger"/>
    <property type="match status" value="1"/>
</dbReference>
<dbReference type="HAMAP" id="MF_03047">
    <property type="entry name" value="Sgf11"/>
    <property type="match status" value="1"/>
</dbReference>
<dbReference type="InterPro" id="IPR013246">
    <property type="entry name" value="SAGA_su_Sgf11"/>
</dbReference>
<dbReference type="InterPro" id="IPR013243">
    <property type="entry name" value="SCA7_dom"/>
</dbReference>
<dbReference type="InterPro" id="IPR051078">
    <property type="entry name" value="SGF11"/>
</dbReference>
<dbReference type="PANTHER" id="PTHR46367">
    <property type="entry name" value="ATAXIN-7-LIKE PROTEIN 3"/>
    <property type="match status" value="1"/>
</dbReference>
<dbReference type="PANTHER" id="PTHR46367:SF1">
    <property type="entry name" value="ATAXIN-7-LIKE PROTEIN 3"/>
    <property type="match status" value="1"/>
</dbReference>
<dbReference type="Pfam" id="PF08313">
    <property type="entry name" value="SCA7"/>
    <property type="match status" value="1"/>
</dbReference>
<dbReference type="Pfam" id="PF08209">
    <property type="entry name" value="Sgf11"/>
    <property type="match status" value="1"/>
</dbReference>
<dbReference type="PROSITE" id="PS51505">
    <property type="entry name" value="SCA7"/>
    <property type="match status" value="1"/>
</dbReference>
<accession>A2AWT3</accession>
<accession>A2AWT2</accession>
<accession>A2AWT4</accession>
<accession>Q8C1T7</accession>
<keyword id="KW-0010">Activator</keyword>
<keyword id="KW-0025">Alternative splicing</keyword>
<keyword id="KW-0156">Chromatin regulator</keyword>
<keyword id="KW-0479">Metal-binding</keyword>
<keyword id="KW-0539">Nucleus</keyword>
<keyword id="KW-0597">Phosphoprotein</keyword>
<keyword id="KW-1185">Reference proteome</keyword>
<keyword id="KW-0804">Transcription</keyword>
<keyword id="KW-0805">Transcription regulation</keyword>
<keyword id="KW-0862">Zinc</keyword>
<keyword id="KW-0863">Zinc-finger</keyword>
<proteinExistence type="evidence at protein level"/>
<protein>
    <recommendedName>
        <fullName evidence="2">Ataxin-7-like protein 3</fullName>
    </recommendedName>
    <alternativeName>
        <fullName evidence="2">SAGA-associated factor 11 homolog</fullName>
    </alternativeName>
</protein>
<gene>
    <name type="primary">Atxn7l3</name>
</gene>
<evidence type="ECO:0000250" key="1">
    <source>
        <dbReference type="UniProtKB" id="Q14CW9"/>
    </source>
</evidence>
<evidence type="ECO:0000255" key="2">
    <source>
        <dbReference type="HAMAP-Rule" id="MF_03047"/>
    </source>
</evidence>
<evidence type="ECO:0000256" key="3">
    <source>
        <dbReference type="SAM" id="MobiDB-lite"/>
    </source>
</evidence>
<evidence type="ECO:0000305" key="4"/>
<evidence type="ECO:0007744" key="5">
    <source>
    </source>
</evidence>
<organism>
    <name type="scientific">Mus musculus</name>
    <name type="common">Mouse</name>
    <dbReference type="NCBI Taxonomy" id="10090"/>
    <lineage>
        <taxon>Eukaryota</taxon>
        <taxon>Metazoa</taxon>
        <taxon>Chordata</taxon>
        <taxon>Craniata</taxon>
        <taxon>Vertebrata</taxon>
        <taxon>Euteleostomi</taxon>
        <taxon>Mammalia</taxon>
        <taxon>Eutheria</taxon>
        <taxon>Euarchontoglires</taxon>
        <taxon>Glires</taxon>
        <taxon>Rodentia</taxon>
        <taxon>Myomorpha</taxon>
        <taxon>Muroidea</taxon>
        <taxon>Muridae</taxon>
        <taxon>Murinae</taxon>
        <taxon>Mus</taxon>
        <taxon>Mus</taxon>
    </lineage>
</organism>
<name>AT7L3_MOUSE</name>
<sequence>MKMEEMSLSGLDNSKLEAIAQEIYADLVEDSCLGFCFEVHRAVKCGYFFLDDTDPDSMKDFEIVDQPGLDIFGQVFNQWKSKECVCPNCSRSIAASRFAPHLEKCLGMGRNSSRIANRRIANSNNMNKSESDQEDNDDINDNDWSYGSEKKAKKRKSDKNPNSPRRSKSLKHKNGELSNSDPFKYSNSTGISYETLGPEELRSLLTTQCGVISEHTKKMCTRSLRCPQHTDEQRRTVRIYFLGPSAVLPEVESSLDNDGFDMTDSQALISRLQWDGSSDLSPSDSGSSKTSENQGWGLGTNSSESRKTKKKKSHLSLVGTASGLGSNKKKKPKPPAPPTPSIYDDIN</sequence>
<reference key="1">
    <citation type="journal article" date="2009" name="PLoS Biol.">
        <title>Lineage-specific biology revealed by a finished genome assembly of the mouse.</title>
        <authorList>
            <person name="Church D.M."/>
            <person name="Goodstadt L."/>
            <person name="Hillier L.W."/>
            <person name="Zody M.C."/>
            <person name="Goldstein S."/>
            <person name="She X."/>
            <person name="Bult C.J."/>
            <person name="Agarwala R."/>
            <person name="Cherry J.L."/>
            <person name="DiCuccio M."/>
            <person name="Hlavina W."/>
            <person name="Kapustin Y."/>
            <person name="Meric P."/>
            <person name="Maglott D."/>
            <person name="Birtle Z."/>
            <person name="Marques A.C."/>
            <person name="Graves T."/>
            <person name="Zhou S."/>
            <person name="Teague B."/>
            <person name="Potamousis K."/>
            <person name="Churas C."/>
            <person name="Place M."/>
            <person name="Herschleb J."/>
            <person name="Runnheim R."/>
            <person name="Forrest D."/>
            <person name="Amos-Landgraf J."/>
            <person name="Schwartz D.C."/>
            <person name="Cheng Z."/>
            <person name="Lindblad-Toh K."/>
            <person name="Eichler E.E."/>
            <person name="Ponting C.P."/>
        </authorList>
    </citation>
    <scope>NUCLEOTIDE SEQUENCE [LARGE SCALE GENOMIC DNA]</scope>
    <source>
        <strain>C57BL/6J</strain>
    </source>
</reference>
<reference key="2">
    <citation type="submission" date="2005-07" db="EMBL/GenBank/DDBJ databases">
        <authorList>
            <person name="Mural R.J."/>
            <person name="Adams M.D."/>
            <person name="Myers E.W."/>
            <person name="Smith H.O."/>
            <person name="Venter J.C."/>
        </authorList>
    </citation>
    <scope>NUCLEOTIDE SEQUENCE [LARGE SCALE GENOMIC DNA]</scope>
</reference>
<reference key="3">
    <citation type="journal article" date="2005" name="Science">
        <title>The transcriptional landscape of the mammalian genome.</title>
        <authorList>
            <person name="Carninci P."/>
            <person name="Kasukawa T."/>
            <person name="Katayama S."/>
            <person name="Gough J."/>
            <person name="Frith M.C."/>
            <person name="Maeda N."/>
            <person name="Oyama R."/>
            <person name="Ravasi T."/>
            <person name="Lenhard B."/>
            <person name="Wells C."/>
            <person name="Kodzius R."/>
            <person name="Shimokawa K."/>
            <person name="Bajic V.B."/>
            <person name="Brenner S.E."/>
            <person name="Batalov S."/>
            <person name="Forrest A.R."/>
            <person name="Zavolan M."/>
            <person name="Davis M.J."/>
            <person name="Wilming L.G."/>
            <person name="Aidinis V."/>
            <person name="Allen J.E."/>
            <person name="Ambesi-Impiombato A."/>
            <person name="Apweiler R."/>
            <person name="Aturaliya R.N."/>
            <person name="Bailey T.L."/>
            <person name="Bansal M."/>
            <person name="Baxter L."/>
            <person name="Beisel K.W."/>
            <person name="Bersano T."/>
            <person name="Bono H."/>
            <person name="Chalk A.M."/>
            <person name="Chiu K.P."/>
            <person name="Choudhary V."/>
            <person name="Christoffels A."/>
            <person name="Clutterbuck D.R."/>
            <person name="Crowe M.L."/>
            <person name="Dalla E."/>
            <person name="Dalrymple B.P."/>
            <person name="de Bono B."/>
            <person name="Della Gatta G."/>
            <person name="di Bernardo D."/>
            <person name="Down T."/>
            <person name="Engstrom P."/>
            <person name="Fagiolini M."/>
            <person name="Faulkner G."/>
            <person name="Fletcher C.F."/>
            <person name="Fukushima T."/>
            <person name="Furuno M."/>
            <person name="Futaki S."/>
            <person name="Gariboldi M."/>
            <person name="Georgii-Hemming P."/>
            <person name="Gingeras T.R."/>
            <person name="Gojobori T."/>
            <person name="Green R.E."/>
            <person name="Gustincich S."/>
            <person name="Harbers M."/>
            <person name="Hayashi Y."/>
            <person name="Hensch T.K."/>
            <person name="Hirokawa N."/>
            <person name="Hill D."/>
            <person name="Huminiecki L."/>
            <person name="Iacono M."/>
            <person name="Ikeo K."/>
            <person name="Iwama A."/>
            <person name="Ishikawa T."/>
            <person name="Jakt M."/>
            <person name="Kanapin A."/>
            <person name="Katoh M."/>
            <person name="Kawasawa Y."/>
            <person name="Kelso J."/>
            <person name="Kitamura H."/>
            <person name="Kitano H."/>
            <person name="Kollias G."/>
            <person name="Krishnan S.P."/>
            <person name="Kruger A."/>
            <person name="Kummerfeld S.K."/>
            <person name="Kurochkin I.V."/>
            <person name="Lareau L.F."/>
            <person name="Lazarevic D."/>
            <person name="Lipovich L."/>
            <person name="Liu J."/>
            <person name="Liuni S."/>
            <person name="McWilliam S."/>
            <person name="Madan Babu M."/>
            <person name="Madera M."/>
            <person name="Marchionni L."/>
            <person name="Matsuda H."/>
            <person name="Matsuzawa S."/>
            <person name="Miki H."/>
            <person name="Mignone F."/>
            <person name="Miyake S."/>
            <person name="Morris K."/>
            <person name="Mottagui-Tabar S."/>
            <person name="Mulder N."/>
            <person name="Nakano N."/>
            <person name="Nakauchi H."/>
            <person name="Ng P."/>
            <person name="Nilsson R."/>
            <person name="Nishiguchi S."/>
            <person name="Nishikawa S."/>
            <person name="Nori F."/>
            <person name="Ohara O."/>
            <person name="Okazaki Y."/>
            <person name="Orlando V."/>
            <person name="Pang K.C."/>
            <person name="Pavan W.J."/>
            <person name="Pavesi G."/>
            <person name="Pesole G."/>
            <person name="Petrovsky N."/>
            <person name="Piazza S."/>
            <person name="Reed J."/>
            <person name="Reid J.F."/>
            <person name="Ring B.Z."/>
            <person name="Ringwald M."/>
            <person name="Rost B."/>
            <person name="Ruan Y."/>
            <person name="Salzberg S.L."/>
            <person name="Sandelin A."/>
            <person name="Schneider C."/>
            <person name="Schoenbach C."/>
            <person name="Sekiguchi K."/>
            <person name="Semple C.A."/>
            <person name="Seno S."/>
            <person name="Sessa L."/>
            <person name="Sheng Y."/>
            <person name="Shibata Y."/>
            <person name="Shimada H."/>
            <person name="Shimada K."/>
            <person name="Silva D."/>
            <person name="Sinclair B."/>
            <person name="Sperling S."/>
            <person name="Stupka E."/>
            <person name="Sugiura K."/>
            <person name="Sultana R."/>
            <person name="Takenaka Y."/>
            <person name="Taki K."/>
            <person name="Tammoja K."/>
            <person name="Tan S.L."/>
            <person name="Tang S."/>
            <person name="Taylor M.S."/>
            <person name="Tegner J."/>
            <person name="Teichmann S.A."/>
            <person name="Ueda H.R."/>
            <person name="van Nimwegen E."/>
            <person name="Verardo R."/>
            <person name="Wei C.L."/>
            <person name="Yagi K."/>
            <person name="Yamanishi H."/>
            <person name="Zabarovsky E."/>
            <person name="Zhu S."/>
            <person name="Zimmer A."/>
            <person name="Hide W."/>
            <person name="Bult C."/>
            <person name="Grimmond S.M."/>
            <person name="Teasdale R.D."/>
            <person name="Liu E.T."/>
            <person name="Brusic V."/>
            <person name="Quackenbush J."/>
            <person name="Wahlestedt C."/>
            <person name="Mattick J.S."/>
            <person name="Hume D.A."/>
            <person name="Kai C."/>
            <person name="Sasaki D."/>
            <person name="Tomaru Y."/>
            <person name="Fukuda S."/>
            <person name="Kanamori-Katayama M."/>
            <person name="Suzuki M."/>
            <person name="Aoki J."/>
            <person name="Arakawa T."/>
            <person name="Iida J."/>
            <person name="Imamura K."/>
            <person name="Itoh M."/>
            <person name="Kato T."/>
            <person name="Kawaji H."/>
            <person name="Kawagashira N."/>
            <person name="Kawashima T."/>
            <person name="Kojima M."/>
            <person name="Kondo S."/>
            <person name="Konno H."/>
            <person name="Nakano K."/>
            <person name="Ninomiya N."/>
            <person name="Nishio T."/>
            <person name="Okada M."/>
            <person name="Plessy C."/>
            <person name="Shibata K."/>
            <person name="Shiraki T."/>
            <person name="Suzuki S."/>
            <person name="Tagami M."/>
            <person name="Waki K."/>
            <person name="Watahiki A."/>
            <person name="Okamura-Oho Y."/>
            <person name="Suzuki H."/>
            <person name="Kawai J."/>
            <person name="Hayashizaki Y."/>
        </authorList>
    </citation>
    <scope>NUCLEOTIDE SEQUENCE [LARGE SCALE MRNA] OF 1-308 (ISOFORM 1)</scope>
    <source>
        <strain>C57BL/6J</strain>
        <tissue>Spinal cord</tissue>
    </source>
</reference>
<reference key="4">
    <citation type="journal article" date="2010" name="Cell">
        <title>A tissue-specific atlas of mouse protein phosphorylation and expression.</title>
        <authorList>
            <person name="Huttlin E.L."/>
            <person name="Jedrychowski M.P."/>
            <person name="Elias J.E."/>
            <person name="Goswami T."/>
            <person name="Rad R."/>
            <person name="Beausoleil S.A."/>
            <person name="Villen J."/>
            <person name="Haas W."/>
            <person name="Sowa M.E."/>
            <person name="Gygi S.P."/>
        </authorList>
    </citation>
    <scope>PHOSPHORYLATION [LARGE SCALE ANALYSIS] AT SER-281</scope>
    <scope>IDENTIFICATION BY MASS SPECTROMETRY [LARGE SCALE ANALYSIS]</scope>
    <source>
        <tissue>Kidney</tissue>
        <tissue>Pancreas</tissue>
        <tissue>Spleen</tissue>
        <tissue>Testis</tissue>
    </source>
</reference>